<proteinExistence type="evidence at transcript level"/>
<sequence length="1217" mass="137745">METSSISTVEDKPPQHQVFINFRGADLRRRFVSHLVTALKLNNINVFIDDYEDRGQPLDVLLKRIEESKIVLAIFSGNYTESVWCVRELEKIKDCTDEGTLVAIPIFYKLEPSTVRDLKGKFGDRFRSMAKGDERKKKWKEAFNLIPNIMGITIDKKSVESEKVNEIVKAVKTALTGIPPEGSHNAVVGALGNSNAGTSSGDKKHETFGNEQRLKDLEEKLDRDKYKGTRIIGVVGMPGIGKTTLLKELYKTWQGKFSRHALIDQIRVKSKHLELDRLPQMLLGELSKLNNPHVDNLKDPYSQLHERKVLVVLDDVSKREQIDALREILDWIKEGKEGSRVVIATSDMSLTNGLVDDTYMVQNLNHRDSLQLFHYHAFIDDQANPQKKDFMKLSEGFVHYARGHPLALKVLGGELNKKSMDHWNSKMKKLAQSPSPNIVSVFQVSYDELTTAQKDAFLDIACFRSQDKDYVESLLASSDLGSAEAMSAVKSLTDKFLINTCDGRVEMHDLLYKFSREIDLKASNQDGSRQRRLWLHQHIIKGGIINVLQNKMKAANVRGIFLDLSEVEDETSLDRDHFINMGNLRYLKFYNSHCPQECKTNNKINIPDKLKLPLKEVRCLHWLKFPLETLPNDFNPINLVDLKLPYSEMEQLWEGDKDTPCLRWVDLNHSSKLCSLSGLSKAEKLQRLNLEGCTTLKAFPHDMKKMKMLAFLNLKGCTSLESLPEMNLISLKTLTLSGCSTFKEFPLISDNIETLYLDGTAISQLPMNMEKLQRLVVLNMKDCKMLEEIPGRVGELKALQELILSDCLNLKIFPEIDISFLNILLLDGTAIEVMPQLPSVQYLCLSRNAKISCLPVGISQLSQLKWLDLKYCTSLTSVPEFPPNLQCLDAHGCSSLKTVSKPLARIMPTEQNHSTFIFTNCENLEQAAKEEITSYAQRKCQLLSYARKRYNGGLVSESLFSTCFPGCEVPSWFCHETVGSELEVKLLPHWHDKKLAGIALCAVVSCLDPQDQVSRLSVTCTFKVKDEDKSWVPYTCPVGSWTRHGGGKDKIELDHVFIGYTSCPHTIKCHEEGNSDECNPTEASLKFTVTGGTSENGKYKVLKCGLSLVYAKDKDKNSALETKYDMLIGKSFQETSEGVDGRVKKTKGKYVMPVEKNFQETTEGVDGRVKKKKKTRMDNGRPKKKQRSGRDDNQTRMQVELQEGNINSVIMHTVKNF</sequence>
<evidence type="ECO:0000250" key="1">
    <source>
        <dbReference type="UniProtKB" id="Q9XGM3"/>
    </source>
</evidence>
<evidence type="ECO:0000255" key="2"/>
<evidence type="ECO:0000255" key="3">
    <source>
        <dbReference type="PROSITE-ProRule" id="PRU00204"/>
    </source>
</evidence>
<evidence type="ECO:0000255" key="4">
    <source>
        <dbReference type="PROSITE-ProRule" id="PRU00768"/>
    </source>
</evidence>
<evidence type="ECO:0000256" key="5">
    <source>
        <dbReference type="SAM" id="MobiDB-lite"/>
    </source>
</evidence>
<evidence type="ECO:0000269" key="6">
    <source>
    </source>
</evidence>
<evidence type="ECO:0000269" key="7">
    <source>
    </source>
</evidence>
<evidence type="ECO:0000269" key="8">
    <source>
    </source>
</evidence>
<evidence type="ECO:0000269" key="9">
    <source>
    </source>
</evidence>
<evidence type="ECO:0000303" key="10">
    <source>
    </source>
</evidence>
<evidence type="ECO:0000312" key="11">
    <source>
        <dbReference type="EMBL" id="BAH59426.1"/>
    </source>
</evidence>
<accession>C4B7M7</accession>
<dbReference type="EC" id="3.2.2.6" evidence="3"/>
<dbReference type="EMBL" id="AB470473">
    <property type="protein sequence ID" value="BAH59426.1"/>
    <property type="molecule type" value="mRNA"/>
</dbReference>
<dbReference type="SMR" id="C4B7M7"/>
<dbReference type="ExpressionAtlas" id="C4B7M7">
    <property type="expression patterns" value="baseline and differential"/>
</dbReference>
<dbReference type="GO" id="GO:0005634">
    <property type="term" value="C:nucleus"/>
    <property type="evidence" value="ECO:0007669"/>
    <property type="project" value="UniProtKB-SubCell"/>
</dbReference>
<dbReference type="GO" id="GO:0043531">
    <property type="term" value="F:ADP binding"/>
    <property type="evidence" value="ECO:0007669"/>
    <property type="project" value="InterPro"/>
</dbReference>
<dbReference type="GO" id="GO:0061809">
    <property type="term" value="F:NAD+ nucleosidase activity, cyclic ADP-ribose generating"/>
    <property type="evidence" value="ECO:0007669"/>
    <property type="project" value="UniProtKB-EC"/>
</dbReference>
<dbReference type="GO" id="GO:0006952">
    <property type="term" value="P:defense response"/>
    <property type="evidence" value="ECO:0007669"/>
    <property type="project" value="UniProtKB-KW"/>
</dbReference>
<dbReference type="GO" id="GO:0007165">
    <property type="term" value="P:signal transduction"/>
    <property type="evidence" value="ECO:0007669"/>
    <property type="project" value="InterPro"/>
</dbReference>
<dbReference type="CDD" id="cd00267">
    <property type="entry name" value="ABC_ATPase"/>
    <property type="match status" value="1"/>
</dbReference>
<dbReference type="FunFam" id="1.10.8.430:FF:000002">
    <property type="entry name" value="Disease resistance protein (TIR-NBS-LRR class)"/>
    <property type="match status" value="1"/>
</dbReference>
<dbReference type="FunFam" id="3.40.50.10140:FF:000007">
    <property type="entry name" value="Disease resistance protein (TIR-NBS-LRR class)"/>
    <property type="match status" value="1"/>
</dbReference>
<dbReference type="FunFam" id="3.40.50.300:FF:001862">
    <property type="entry name" value="Disease resistance protein RPS4"/>
    <property type="match status" value="1"/>
</dbReference>
<dbReference type="FunFam" id="3.80.10.10:FF:000386">
    <property type="entry name" value="Disease resistance protein RPS4"/>
    <property type="match status" value="1"/>
</dbReference>
<dbReference type="FunFam" id="3.80.10.10:FF:000568">
    <property type="entry name" value="Disease resistance protein RPS4"/>
    <property type="match status" value="1"/>
</dbReference>
<dbReference type="Gene3D" id="1.10.8.430">
    <property type="entry name" value="Helical domain of apoptotic protease-activating factors"/>
    <property type="match status" value="1"/>
</dbReference>
<dbReference type="Gene3D" id="3.40.50.300">
    <property type="entry name" value="P-loop containing nucleotide triphosphate hydrolases"/>
    <property type="match status" value="1"/>
</dbReference>
<dbReference type="Gene3D" id="3.80.10.10">
    <property type="entry name" value="Ribonuclease Inhibitor"/>
    <property type="match status" value="2"/>
</dbReference>
<dbReference type="Gene3D" id="3.40.50.10140">
    <property type="entry name" value="Toll/interleukin-1 receptor homology (TIR) domain"/>
    <property type="match status" value="1"/>
</dbReference>
<dbReference type="InterPro" id="IPR042197">
    <property type="entry name" value="Apaf_helical"/>
</dbReference>
<dbReference type="InterPro" id="IPR045344">
    <property type="entry name" value="C-JID"/>
</dbReference>
<dbReference type="InterPro" id="IPR044974">
    <property type="entry name" value="Disease_R_plants"/>
</dbReference>
<dbReference type="InterPro" id="IPR011713">
    <property type="entry name" value="Leu-rich_rpt_3"/>
</dbReference>
<dbReference type="InterPro" id="IPR032675">
    <property type="entry name" value="LRR_dom_sf"/>
</dbReference>
<dbReference type="InterPro" id="IPR002182">
    <property type="entry name" value="NB-ARC"/>
</dbReference>
<dbReference type="InterPro" id="IPR027417">
    <property type="entry name" value="P-loop_NTPase"/>
</dbReference>
<dbReference type="InterPro" id="IPR000157">
    <property type="entry name" value="TIR_dom"/>
</dbReference>
<dbReference type="InterPro" id="IPR035897">
    <property type="entry name" value="Toll_tir_struct_dom_sf"/>
</dbReference>
<dbReference type="PANTHER" id="PTHR11017:SF277">
    <property type="entry name" value="DISEASE RESISTANCE PROTEIN RPS4-RELATED"/>
    <property type="match status" value="1"/>
</dbReference>
<dbReference type="PANTHER" id="PTHR11017">
    <property type="entry name" value="LEUCINE-RICH REPEAT-CONTAINING PROTEIN"/>
    <property type="match status" value="1"/>
</dbReference>
<dbReference type="Pfam" id="PF20160">
    <property type="entry name" value="C-JID"/>
    <property type="match status" value="1"/>
</dbReference>
<dbReference type="Pfam" id="PF07725">
    <property type="entry name" value="LRR_3"/>
    <property type="match status" value="1"/>
</dbReference>
<dbReference type="Pfam" id="PF00931">
    <property type="entry name" value="NB-ARC"/>
    <property type="match status" value="1"/>
</dbReference>
<dbReference type="Pfam" id="PF01582">
    <property type="entry name" value="TIR"/>
    <property type="match status" value="1"/>
</dbReference>
<dbReference type="Pfam" id="PF23282">
    <property type="entry name" value="WHD_ROQ1"/>
    <property type="match status" value="1"/>
</dbReference>
<dbReference type="PRINTS" id="PR00364">
    <property type="entry name" value="DISEASERSIST"/>
</dbReference>
<dbReference type="SMART" id="SM00255">
    <property type="entry name" value="TIR"/>
    <property type="match status" value="1"/>
</dbReference>
<dbReference type="SUPFAM" id="SSF52058">
    <property type="entry name" value="L domain-like"/>
    <property type="match status" value="1"/>
</dbReference>
<dbReference type="SUPFAM" id="SSF52540">
    <property type="entry name" value="P-loop containing nucleoside triphosphate hydrolases"/>
    <property type="match status" value="1"/>
</dbReference>
<dbReference type="SUPFAM" id="SSF52200">
    <property type="entry name" value="Toll/Interleukin receptor TIR domain"/>
    <property type="match status" value="1"/>
</dbReference>
<dbReference type="PROSITE" id="PS50104">
    <property type="entry name" value="TIR"/>
    <property type="match status" value="1"/>
</dbReference>
<gene>
    <name evidence="10" type="primary">RPS4</name>
</gene>
<feature type="chain" id="PRO_0000431366" description="Disease resistance protein RPS4">
    <location>
        <begin position="1"/>
        <end position="1217"/>
    </location>
</feature>
<feature type="domain" description="TIR" evidence="3">
    <location>
        <begin position="14"/>
        <end position="175"/>
    </location>
</feature>
<feature type="domain" description="NB-ARC" evidence="2">
    <location>
        <begin position="211"/>
        <end position="472"/>
    </location>
</feature>
<feature type="repeat" description="LRR 1" evidence="2">
    <location>
        <begin position="260"/>
        <end position="285"/>
    </location>
</feature>
<feature type="repeat" description="LRR 2" evidence="2">
    <location>
        <begin position="436"/>
        <end position="459"/>
    </location>
</feature>
<feature type="repeat" description="LRR 3" evidence="2">
    <location>
        <begin position="614"/>
        <end position="636"/>
    </location>
</feature>
<feature type="repeat" description="LRR 4" evidence="2">
    <location>
        <begin position="637"/>
        <end position="659"/>
    </location>
</feature>
<feature type="repeat" description="LRR 5" evidence="2">
    <location>
        <begin position="682"/>
        <end position="706"/>
    </location>
</feature>
<feature type="repeat" description="LRR 6" evidence="2">
    <location>
        <begin position="708"/>
        <end position="728"/>
    </location>
</feature>
<feature type="repeat" description="LRR 7" evidence="2">
    <location>
        <begin position="729"/>
        <end position="749"/>
    </location>
</feature>
<feature type="repeat" description="LRR 8" evidence="2">
    <location>
        <begin position="750"/>
        <end position="774"/>
    </location>
</feature>
<feature type="repeat" description="LRR 9" evidence="2">
    <location>
        <begin position="796"/>
        <end position="818"/>
    </location>
</feature>
<feature type="repeat" description="LRR 10" evidence="2">
    <location>
        <begin position="819"/>
        <end position="842"/>
    </location>
</feature>
<feature type="repeat" description="LRR 11" evidence="2">
    <location>
        <begin position="861"/>
        <end position="887"/>
    </location>
</feature>
<feature type="region of interest" description="Disordered" evidence="5">
    <location>
        <begin position="1162"/>
        <end position="1195"/>
    </location>
</feature>
<feature type="short sequence motif" description="Nuclear localization signal" evidence="4">
    <location>
        <begin position="1170"/>
        <end position="1177"/>
    </location>
</feature>
<feature type="active site" evidence="3">
    <location>
        <position position="88"/>
    </location>
</feature>
<organism evidence="11">
    <name type="scientific">Arabidopsis thaliana</name>
    <name type="common">Mouse-ear cress</name>
    <dbReference type="NCBI Taxonomy" id="3702"/>
    <lineage>
        <taxon>Eukaryota</taxon>
        <taxon>Viridiplantae</taxon>
        <taxon>Streptophyta</taxon>
        <taxon>Embryophyta</taxon>
        <taxon>Tracheophyta</taxon>
        <taxon>Spermatophyta</taxon>
        <taxon>Magnoliopsida</taxon>
        <taxon>eudicotyledons</taxon>
        <taxon>Gunneridae</taxon>
        <taxon>Pentapetalae</taxon>
        <taxon>rosids</taxon>
        <taxon>malvids</taxon>
        <taxon>Brassicales</taxon>
        <taxon>Brassicaceae</taxon>
        <taxon>Camelineae</taxon>
        <taxon>Arabidopsis</taxon>
    </lineage>
</organism>
<keyword id="KW-0025">Alternative splicing</keyword>
<keyword id="KW-0378">Hydrolase</keyword>
<keyword id="KW-0433">Leucine-rich repeat</keyword>
<keyword id="KW-0520">NAD</keyword>
<keyword id="KW-0539">Nucleus</keyword>
<keyword id="KW-0611">Plant defense</keyword>
<keyword id="KW-0677">Repeat</keyword>
<comment type="function">
    <text evidence="6 7 8 9">Disease resistance (R) protein that specifically recognizes the AvrRps4 type III effector avirulence protein from Pseudomonas syringae. Resistance proteins guard the plant against pathogens that contain an appropriate avirulence protein via an indirect interaction with this avirulence protein. That triggers a defense system including the hypersensitive response, which restricts the pathogen growth. The combined presence of both regular and alternative RPS4 transcripts with truncated open reading frames (ORFs) is necessary for function. RPS4 function is regulated at multiple levels, including gene expression, alternative splicing, and protein stability. Acts as a disease resistance protein involved in resistance to fungal and bacterial pathogens, including R.solanacearum, P.syringae pv. tomato and C.higginsianum. In presence of RRS1, elicites an EDS1-dependent hypersensitive response (PubMed:24146667).</text>
</comment>
<comment type="catalytic activity">
    <reaction evidence="3">
        <text>NAD(+) + H2O = ADP-D-ribose + nicotinamide + H(+)</text>
        <dbReference type="Rhea" id="RHEA:16301"/>
        <dbReference type="ChEBI" id="CHEBI:15377"/>
        <dbReference type="ChEBI" id="CHEBI:15378"/>
        <dbReference type="ChEBI" id="CHEBI:17154"/>
        <dbReference type="ChEBI" id="CHEBI:57540"/>
        <dbReference type="ChEBI" id="CHEBI:57967"/>
        <dbReference type="EC" id="3.2.2.6"/>
    </reaction>
    <physiologicalReaction direction="left-to-right" evidence="3">
        <dbReference type="Rhea" id="RHEA:16302"/>
    </physiologicalReaction>
</comment>
<comment type="subunit">
    <text evidence="1">Interacts with EDS1.</text>
</comment>
<comment type="subcellular location">
    <subcellularLocation>
        <location evidence="4">Nucleus</location>
    </subcellularLocation>
</comment>
<comment type="alternative products">
    <event type="alternative splicing"/>
    <isoform>
        <id>C4B7M7-1</id>
        <name>1</name>
        <sequence type="displayed"/>
    </isoform>
    <text evidence="6">A number of isoforms are produced.</text>
</comment>
<comment type="induction">
    <text evidence="6">Up-regulated by AvrRps4 in an EDS1-dependent manner.</text>
</comment>
<comment type="domain">
    <text evidence="1">The TIR domain is a signaling domain involved in cell death induction.</text>
</comment>
<comment type="domain">
    <text evidence="3">The TIR domain mediates NAD(+) hydrolase (NADase) activity. Self-association of TIR domains is required for NADase activity.</text>
</comment>
<comment type="disruption phenotype">
    <text evidence="7">Loss of resistance to C.higginsianum.</text>
</comment>
<protein>
    <recommendedName>
        <fullName evidence="10">Disease resistance protein RPS4</fullName>
        <ecNumber evidence="3">3.2.2.6</ecNumber>
    </recommendedName>
    <alternativeName>
        <fullName evidence="10">Resistance to Pseudomonas syringae 4</fullName>
    </alternativeName>
</protein>
<reference key="1">
    <citation type="journal article" date="2009" name="Plant J.">
        <title>RRS1 and RPS4 provide a dual Resistance-gene system against fungal and bacterial pathogens.</title>
        <authorList>
            <person name="Narusaka M."/>
            <person name="Shirasu K."/>
            <person name="Noutoshi Y."/>
            <person name="Kubo Y."/>
            <person name="Shiraishi T."/>
            <person name="Iwabuchi M."/>
            <person name="Narusaka Y."/>
        </authorList>
    </citation>
    <scope>NUCLEOTIDE SEQUENCE [GENOMIC DNA]</scope>
    <scope>FUNCTION</scope>
    <scope>DISRUPTION PHENOTYPE</scope>
    <source>
        <strain>cv. Wassilewskija</strain>
    </source>
</reference>
<reference key="2">
    <citation type="journal article" date="2007" name="Plant Physiol.">
        <title>Alternative splicing and mRNA levels of the disease resistance gene RPS4 are induced during defense responses.</title>
        <authorList>
            <person name="Zhang X.C."/>
            <person name="Gassmann W."/>
        </authorList>
    </citation>
    <scope>FUNCTION</scope>
    <scope>ALTERNATIVE SPLICING</scope>
    <scope>INDUCTION BY AVRRPS4</scope>
    <source>
        <strain>cv. Columbia</strain>
        <strain>cv. Landsberg erecta</strain>
        <strain>cv. Wassilewskija</strain>
    </source>
</reference>
<reference key="3">
    <citation type="journal article" date="2009" name="Plant Signal. Behav.">
        <title>A dual resistance gene system prevents infection by three distinct pathogens.</title>
        <authorList>
            <person name="Narusaka M."/>
            <person name="Kubo Y."/>
            <person name="Shiraishi T."/>
            <person name="Iwabuchi M."/>
            <person name="Narusaka Y."/>
        </authorList>
    </citation>
    <scope>FUNCTION</scope>
</reference>
<reference key="4">
    <citation type="journal article" date="2013" name="Front. Plant Sci.">
        <title>Arabidopsis TNL-WRKY domain receptor RRS1 contributes to temperature-conditioned RPS4 auto-immunity.</title>
        <authorList>
            <person name="Heidrich K."/>
            <person name="Tsuda K."/>
            <person name="Blanvillain-Baufume S."/>
            <person name="Wirthmueller L."/>
            <person name="Bautor J."/>
            <person name="Parker J.E."/>
        </authorList>
    </citation>
    <scope>FUNCTION</scope>
    <source>
        <strain>cv. Columbia</strain>
        <strain>cv. Wassilewskija</strain>
    </source>
</reference>
<name>RPS4W_ARATH</name>